<evidence type="ECO:0000250" key="1">
    <source>
        <dbReference type="UniProtKB" id="Q96HA9"/>
    </source>
</evidence>
<evidence type="ECO:0000255" key="2"/>
<evidence type="ECO:0000269" key="3">
    <source>
    </source>
</evidence>
<evidence type="ECO:0000303" key="4">
    <source>
    </source>
</evidence>
<evidence type="ECO:0000305" key="5"/>
<proteinExistence type="evidence at protein level"/>
<protein>
    <recommendedName>
        <fullName>Peroxisomal membrane protein 11C</fullName>
    </recommendedName>
    <alternativeName>
        <fullName>Peroxin-11C</fullName>
    </alternativeName>
    <alternativeName>
        <fullName>Peroxisomal biogenesis factor 11C</fullName>
    </alternativeName>
    <alternativeName>
        <fullName>Protein PEX11 homolog gamma</fullName>
        <shortName>PEX11-gamma</shortName>
    </alternativeName>
</protein>
<name>PX11C_MOUSE</name>
<reference key="1">
    <citation type="journal article" date="2005" name="Science">
        <title>The transcriptional landscape of the mammalian genome.</title>
        <authorList>
            <person name="Carninci P."/>
            <person name="Kasukawa T."/>
            <person name="Katayama S."/>
            <person name="Gough J."/>
            <person name="Frith M.C."/>
            <person name="Maeda N."/>
            <person name="Oyama R."/>
            <person name="Ravasi T."/>
            <person name="Lenhard B."/>
            <person name="Wells C."/>
            <person name="Kodzius R."/>
            <person name="Shimokawa K."/>
            <person name="Bajic V.B."/>
            <person name="Brenner S.E."/>
            <person name="Batalov S."/>
            <person name="Forrest A.R."/>
            <person name="Zavolan M."/>
            <person name="Davis M.J."/>
            <person name="Wilming L.G."/>
            <person name="Aidinis V."/>
            <person name="Allen J.E."/>
            <person name="Ambesi-Impiombato A."/>
            <person name="Apweiler R."/>
            <person name="Aturaliya R.N."/>
            <person name="Bailey T.L."/>
            <person name="Bansal M."/>
            <person name="Baxter L."/>
            <person name="Beisel K.W."/>
            <person name="Bersano T."/>
            <person name="Bono H."/>
            <person name="Chalk A.M."/>
            <person name="Chiu K.P."/>
            <person name="Choudhary V."/>
            <person name="Christoffels A."/>
            <person name="Clutterbuck D.R."/>
            <person name="Crowe M.L."/>
            <person name="Dalla E."/>
            <person name="Dalrymple B.P."/>
            <person name="de Bono B."/>
            <person name="Della Gatta G."/>
            <person name="di Bernardo D."/>
            <person name="Down T."/>
            <person name="Engstrom P."/>
            <person name="Fagiolini M."/>
            <person name="Faulkner G."/>
            <person name="Fletcher C.F."/>
            <person name="Fukushima T."/>
            <person name="Furuno M."/>
            <person name="Futaki S."/>
            <person name="Gariboldi M."/>
            <person name="Georgii-Hemming P."/>
            <person name="Gingeras T.R."/>
            <person name="Gojobori T."/>
            <person name="Green R.E."/>
            <person name="Gustincich S."/>
            <person name="Harbers M."/>
            <person name="Hayashi Y."/>
            <person name="Hensch T.K."/>
            <person name="Hirokawa N."/>
            <person name="Hill D."/>
            <person name="Huminiecki L."/>
            <person name="Iacono M."/>
            <person name="Ikeo K."/>
            <person name="Iwama A."/>
            <person name="Ishikawa T."/>
            <person name="Jakt M."/>
            <person name="Kanapin A."/>
            <person name="Katoh M."/>
            <person name="Kawasawa Y."/>
            <person name="Kelso J."/>
            <person name="Kitamura H."/>
            <person name="Kitano H."/>
            <person name="Kollias G."/>
            <person name="Krishnan S.P."/>
            <person name="Kruger A."/>
            <person name="Kummerfeld S.K."/>
            <person name="Kurochkin I.V."/>
            <person name="Lareau L.F."/>
            <person name="Lazarevic D."/>
            <person name="Lipovich L."/>
            <person name="Liu J."/>
            <person name="Liuni S."/>
            <person name="McWilliam S."/>
            <person name="Madan Babu M."/>
            <person name="Madera M."/>
            <person name="Marchionni L."/>
            <person name="Matsuda H."/>
            <person name="Matsuzawa S."/>
            <person name="Miki H."/>
            <person name="Mignone F."/>
            <person name="Miyake S."/>
            <person name="Morris K."/>
            <person name="Mottagui-Tabar S."/>
            <person name="Mulder N."/>
            <person name="Nakano N."/>
            <person name="Nakauchi H."/>
            <person name="Ng P."/>
            <person name="Nilsson R."/>
            <person name="Nishiguchi S."/>
            <person name="Nishikawa S."/>
            <person name="Nori F."/>
            <person name="Ohara O."/>
            <person name="Okazaki Y."/>
            <person name="Orlando V."/>
            <person name="Pang K.C."/>
            <person name="Pavan W.J."/>
            <person name="Pavesi G."/>
            <person name="Pesole G."/>
            <person name="Petrovsky N."/>
            <person name="Piazza S."/>
            <person name="Reed J."/>
            <person name="Reid J.F."/>
            <person name="Ring B.Z."/>
            <person name="Ringwald M."/>
            <person name="Rost B."/>
            <person name="Ruan Y."/>
            <person name="Salzberg S.L."/>
            <person name="Sandelin A."/>
            <person name="Schneider C."/>
            <person name="Schoenbach C."/>
            <person name="Sekiguchi K."/>
            <person name="Semple C.A."/>
            <person name="Seno S."/>
            <person name="Sessa L."/>
            <person name="Sheng Y."/>
            <person name="Shibata Y."/>
            <person name="Shimada H."/>
            <person name="Shimada K."/>
            <person name="Silva D."/>
            <person name="Sinclair B."/>
            <person name="Sperling S."/>
            <person name="Stupka E."/>
            <person name="Sugiura K."/>
            <person name="Sultana R."/>
            <person name="Takenaka Y."/>
            <person name="Taki K."/>
            <person name="Tammoja K."/>
            <person name="Tan S.L."/>
            <person name="Tang S."/>
            <person name="Taylor M.S."/>
            <person name="Tegner J."/>
            <person name="Teichmann S.A."/>
            <person name="Ueda H.R."/>
            <person name="van Nimwegen E."/>
            <person name="Verardo R."/>
            <person name="Wei C.L."/>
            <person name="Yagi K."/>
            <person name="Yamanishi H."/>
            <person name="Zabarovsky E."/>
            <person name="Zhu S."/>
            <person name="Zimmer A."/>
            <person name="Hide W."/>
            <person name="Bult C."/>
            <person name="Grimmond S.M."/>
            <person name="Teasdale R.D."/>
            <person name="Liu E.T."/>
            <person name="Brusic V."/>
            <person name="Quackenbush J."/>
            <person name="Wahlestedt C."/>
            <person name="Mattick J.S."/>
            <person name="Hume D.A."/>
            <person name="Kai C."/>
            <person name="Sasaki D."/>
            <person name="Tomaru Y."/>
            <person name="Fukuda S."/>
            <person name="Kanamori-Katayama M."/>
            <person name="Suzuki M."/>
            <person name="Aoki J."/>
            <person name="Arakawa T."/>
            <person name="Iida J."/>
            <person name="Imamura K."/>
            <person name="Itoh M."/>
            <person name="Kato T."/>
            <person name="Kawaji H."/>
            <person name="Kawagashira N."/>
            <person name="Kawashima T."/>
            <person name="Kojima M."/>
            <person name="Kondo S."/>
            <person name="Konno H."/>
            <person name="Nakano K."/>
            <person name="Ninomiya N."/>
            <person name="Nishio T."/>
            <person name="Okada M."/>
            <person name="Plessy C."/>
            <person name="Shibata K."/>
            <person name="Shiraki T."/>
            <person name="Suzuki S."/>
            <person name="Tagami M."/>
            <person name="Waki K."/>
            <person name="Watahiki A."/>
            <person name="Okamura-Oho Y."/>
            <person name="Suzuki H."/>
            <person name="Kawai J."/>
            <person name="Hayashizaki Y."/>
        </authorList>
    </citation>
    <scope>NUCLEOTIDE SEQUENCE [LARGE SCALE MRNA] (ISOFORMS 1 AND 2)</scope>
    <source>
        <strain>C57BL/6J</strain>
        <tissue>Pancreas</tissue>
    </source>
</reference>
<reference key="2">
    <citation type="journal article" date="2004" name="Genome Res.">
        <title>The status, quality, and expansion of the NIH full-length cDNA project: the Mammalian Gene Collection (MGC).</title>
        <authorList>
            <consortium name="The MGC Project Team"/>
        </authorList>
    </citation>
    <scope>NUCLEOTIDE SEQUENCE [LARGE SCALE MRNA] (ISOFORM 1)</scope>
    <source>
        <tissue>Limb</tissue>
    </source>
</reference>
<reference key="3">
    <citation type="journal article" date="2002" name="Mol. Cell. Biol.">
        <title>PEX11alpha is required for peroxisome proliferation in response to 4-phenylbutyrate but is dispensable for peroxisome proliferator-activated receptor alpha-mediated peroxisome proliferation.</title>
        <authorList>
            <person name="Li X."/>
            <person name="Baumgart E."/>
            <person name="Dong G.-X."/>
            <person name="Morrell J.C."/>
            <person name="Jimenez-Sanchez G."/>
            <person name="Valle D."/>
            <person name="Smith K.D."/>
            <person name="Gould S.J."/>
        </authorList>
    </citation>
    <scope>TISSUE SPECIFICITY</scope>
</reference>
<reference key="4">
    <citation type="journal article" date="2010" name="Cell">
        <title>A tissue-specific atlas of mouse protein phosphorylation and expression.</title>
        <authorList>
            <person name="Huttlin E.L."/>
            <person name="Jedrychowski M.P."/>
            <person name="Elias J.E."/>
            <person name="Goswami T."/>
            <person name="Rad R."/>
            <person name="Beausoleil S.A."/>
            <person name="Villen J."/>
            <person name="Haas W."/>
            <person name="Sowa M.E."/>
            <person name="Gygi S.P."/>
        </authorList>
    </citation>
    <scope>IDENTIFICATION BY MASS SPECTROMETRY [LARGE SCALE ANALYSIS]</scope>
    <source>
        <tissue>Brown adipose tissue</tissue>
        <tissue>Kidney</tissue>
        <tissue>Liver</tissue>
        <tissue>Testis</tissue>
    </source>
</reference>
<comment type="function">
    <text evidence="1">Promotes membrane protrusion and elongation on the peroxisomal surface.</text>
</comment>
<comment type="subunit">
    <text evidence="1">Homodimer. Heterodimer with either PEX11A or PEX11B. Interacts with FIS1.</text>
</comment>
<comment type="subcellular location">
    <subcellularLocation>
        <location evidence="1">Peroxisome membrane</location>
        <topology evidence="1">Multi-pass membrane protein</topology>
    </subcellularLocation>
</comment>
<comment type="alternative products">
    <event type="alternative splicing"/>
    <isoform>
        <id>Q6P6M5-1</id>
        <name>1</name>
        <sequence type="displayed"/>
    </isoform>
    <isoform>
        <id>Q6P6M5-2</id>
        <name>2</name>
        <sequence type="described" ref="VSP_013540 VSP_013541"/>
    </isoform>
</comment>
<comment type="tissue specificity">
    <text evidence="3">Expressed in liver and at much lower levels in heart, kidney and testis.</text>
</comment>
<comment type="similarity">
    <text evidence="5">Belongs to the peroxin-11 family.</text>
</comment>
<sequence length="241" mass="27152">MALLNRLASALESHRVRDRLIRTLGYCCQLIGGVLVEQCPNRSEVGRRLLVVSAQFNHCRTVLRLFDDLAMFVYTKQYGLGTKEEDIFIRWLSVLSNVTDQLYYPCEHIAWAADAKVLRVDSAWWWTLNTALWTLSLLLGAVKALWTMLKLRQKLRSPTGTSASQLPRSKRRAMEARICSEVLTLLSNLADLANAVHWLPRGVLWAGRFPPWLVGLMGTISSILSTCQAVRAGRQAEADSP</sequence>
<keyword id="KW-0025">Alternative splicing</keyword>
<keyword id="KW-0472">Membrane</keyword>
<keyword id="KW-0576">Peroxisome</keyword>
<keyword id="KW-1185">Reference proteome</keyword>
<keyword id="KW-0812">Transmembrane</keyword>
<keyword id="KW-1133">Transmembrane helix</keyword>
<organism>
    <name type="scientific">Mus musculus</name>
    <name type="common">Mouse</name>
    <dbReference type="NCBI Taxonomy" id="10090"/>
    <lineage>
        <taxon>Eukaryota</taxon>
        <taxon>Metazoa</taxon>
        <taxon>Chordata</taxon>
        <taxon>Craniata</taxon>
        <taxon>Vertebrata</taxon>
        <taxon>Euteleostomi</taxon>
        <taxon>Mammalia</taxon>
        <taxon>Eutheria</taxon>
        <taxon>Euarchontoglires</taxon>
        <taxon>Glires</taxon>
        <taxon>Rodentia</taxon>
        <taxon>Myomorpha</taxon>
        <taxon>Muroidea</taxon>
        <taxon>Muridae</taxon>
        <taxon>Murinae</taxon>
        <taxon>Mus</taxon>
        <taxon>Mus</taxon>
    </lineage>
</organism>
<accession>Q6P6M5</accession>
<accession>Q9D8P0</accession>
<accession>Q9D8X4</accession>
<feature type="chain" id="PRO_0000105971" description="Peroxisomal membrane protein 11C">
    <location>
        <begin position="1"/>
        <end position="241"/>
    </location>
</feature>
<feature type="topological domain" description="Cytoplasmic" evidence="2">
    <location>
        <begin position="1"/>
        <end position="122"/>
    </location>
</feature>
<feature type="transmembrane region" description="Helical" evidence="2">
    <location>
        <begin position="123"/>
        <end position="149"/>
    </location>
</feature>
<feature type="topological domain" description="Lumenal" evidence="2">
    <location>
        <begin position="150"/>
        <end position="211"/>
    </location>
</feature>
<feature type="transmembrane region" description="Helical" evidence="2">
    <location>
        <begin position="212"/>
        <end position="227"/>
    </location>
</feature>
<feature type="topological domain" description="Cytoplasmic" evidence="2">
    <location>
        <begin position="228"/>
        <end position="241"/>
    </location>
</feature>
<feature type="splice variant" id="VSP_013540" description="In isoform 2." evidence="4">
    <location>
        <begin position="21"/>
        <end position="83"/>
    </location>
</feature>
<feature type="splice variant" id="VSP_013541" description="In isoform 2." evidence="4">
    <original>VGLMGTISSILSTCQAVRAGRQAEADSP</original>
    <variation>KKTYLCMYLTHAWCLWRLGPLELELT</variation>
    <location>
        <begin position="214"/>
        <end position="241"/>
    </location>
</feature>
<feature type="sequence conflict" description="In Ref. 2; AAH62135." evidence="5" ref="2">
    <original>R</original>
    <variation>W</variation>
    <location>
        <position position="119"/>
    </location>
</feature>
<dbReference type="EMBL" id="AK007582">
    <property type="protein sequence ID" value="BAB25120.1"/>
    <property type="molecule type" value="mRNA"/>
</dbReference>
<dbReference type="EMBL" id="AK007848">
    <property type="protein sequence ID" value="BAB25302.1"/>
    <property type="molecule type" value="mRNA"/>
</dbReference>
<dbReference type="EMBL" id="BC062135">
    <property type="protein sequence ID" value="AAH62135.1"/>
    <property type="molecule type" value="mRNA"/>
</dbReference>
<dbReference type="CCDS" id="CCDS22061.1">
    <molecule id="Q6P6M5-1"/>
</dbReference>
<dbReference type="CCDS" id="CCDS90364.1">
    <molecule id="Q6P6M5-2"/>
</dbReference>
<dbReference type="RefSeq" id="NP_081227.1">
    <molecule id="Q6P6M5-1"/>
    <property type="nucleotide sequence ID" value="NM_026951.3"/>
</dbReference>
<dbReference type="RefSeq" id="NP_082870.1">
    <molecule id="Q6P6M5-2"/>
    <property type="nucleotide sequence ID" value="NM_028594.1"/>
</dbReference>
<dbReference type="SMR" id="Q6P6M5"/>
<dbReference type="BioGRID" id="213246">
    <property type="interactions" value="1"/>
</dbReference>
<dbReference type="FunCoup" id="Q6P6M5">
    <property type="interactions" value="168"/>
</dbReference>
<dbReference type="STRING" id="10090.ENSMUSP00000004686"/>
<dbReference type="iPTMnet" id="Q6P6M5"/>
<dbReference type="PhosphoSitePlus" id="Q6P6M5"/>
<dbReference type="SwissPalm" id="Q6P6M5"/>
<dbReference type="jPOST" id="Q6P6M5"/>
<dbReference type="PaxDb" id="10090-ENSMUSP00000004686"/>
<dbReference type="PeptideAtlas" id="Q6P6M5"/>
<dbReference type="ProteomicsDB" id="301836">
    <molecule id="Q6P6M5-1"/>
</dbReference>
<dbReference type="ProteomicsDB" id="301837">
    <molecule id="Q6P6M5-2"/>
</dbReference>
<dbReference type="Pumba" id="Q6P6M5"/>
<dbReference type="Antibodypedia" id="42625">
    <property type="antibodies" value="66 antibodies from 22 providers"/>
</dbReference>
<dbReference type="DNASU" id="69129"/>
<dbReference type="Ensembl" id="ENSMUST00000004686.13">
    <molecule id="Q6P6M5-1"/>
    <property type="protein sequence ID" value="ENSMUSP00000004686.7"/>
    <property type="gene ID" value="ENSMUSG00000069633.13"/>
</dbReference>
<dbReference type="Ensembl" id="ENSMUST00000111081.10">
    <molecule id="Q6P6M5-2"/>
    <property type="protein sequence ID" value="ENSMUSP00000106710.4"/>
    <property type="gene ID" value="ENSMUSG00000069633.13"/>
</dbReference>
<dbReference type="GeneID" id="69129"/>
<dbReference type="KEGG" id="mmu:69129"/>
<dbReference type="UCSC" id="uc009krl.1">
    <molecule id="Q6P6M5-2"/>
    <property type="organism name" value="mouse"/>
</dbReference>
<dbReference type="UCSC" id="uc009krm.1">
    <molecule id="Q6P6M5-1"/>
    <property type="organism name" value="mouse"/>
</dbReference>
<dbReference type="AGR" id="MGI:1920905"/>
<dbReference type="CTD" id="92960"/>
<dbReference type="MGI" id="MGI:1920905">
    <property type="gene designation" value="Pex11g"/>
</dbReference>
<dbReference type="VEuPathDB" id="HostDB:ENSMUSG00000069633"/>
<dbReference type="eggNOG" id="KOG4186">
    <property type="taxonomic scope" value="Eukaryota"/>
</dbReference>
<dbReference type="GeneTree" id="ENSGT00390000000427"/>
<dbReference type="HOGENOM" id="CLU_100620_0_0_1"/>
<dbReference type="InParanoid" id="Q6P6M5"/>
<dbReference type="OMA" id="PIEKICW"/>
<dbReference type="OrthoDB" id="10005898at2759"/>
<dbReference type="PhylomeDB" id="Q6P6M5"/>
<dbReference type="TreeFam" id="TF316770"/>
<dbReference type="BioGRID-ORCS" id="69129">
    <property type="hits" value="1 hit in 78 CRISPR screens"/>
</dbReference>
<dbReference type="ChiTaRS" id="Pex11g">
    <property type="organism name" value="mouse"/>
</dbReference>
<dbReference type="PRO" id="PR:Q6P6M5"/>
<dbReference type="Proteomes" id="UP000000589">
    <property type="component" value="Chromosome 8"/>
</dbReference>
<dbReference type="RNAct" id="Q6P6M5">
    <property type="molecule type" value="protein"/>
</dbReference>
<dbReference type="Bgee" id="ENSMUSG00000069633">
    <property type="expression patterns" value="Expressed in spermatocyte and 140 other cell types or tissues"/>
</dbReference>
<dbReference type="GO" id="GO:0005778">
    <property type="term" value="C:peroxisomal membrane"/>
    <property type="evidence" value="ECO:0007669"/>
    <property type="project" value="UniProtKB-SubCell"/>
</dbReference>
<dbReference type="GO" id="GO:0032991">
    <property type="term" value="C:protein-containing complex"/>
    <property type="evidence" value="ECO:0007669"/>
    <property type="project" value="Ensembl"/>
</dbReference>
<dbReference type="GO" id="GO:0016559">
    <property type="term" value="P:peroxisome fission"/>
    <property type="evidence" value="ECO:0007669"/>
    <property type="project" value="Ensembl"/>
</dbReference>
<dbReference type="GO" id="GO:0044375">
    <property type="term" value="P:regulation of peroxisome size"/>
    <property type="evidence" value="ECO:0007669"/>
    <property type="project" value="Ensembl"/>
</dbReference>
<dbReference type="InterPro" id="IPR008733">
    <property type="entry name" value="PEX11"/>
</dbReference>
<dbReference type="InterPro" id="IPR026510">
    <property type="entry name" value="PEX11C_met"/>
</dbReference>
<dbReference type="PANTHER" id="PTHR20990">
    <property type="entry name" value="PEROXISOMAL BIOGENESIS FACTOR 11"/>
    <property type="match status" value="1"/>
</dbReference>
<dbReference type="PANTHER" id="PTHR20990:SF1">
    <property type="entry name" value="PEROXISOMAL MEMBRANE PROTEIN 11C"/>
    <property type="match status" value="1"/>
</dbReference>
<dbReference type="Pfam" id="PF05648">
    <property type="entry name" value="PEX11"/>
    <property type="match status" value="1"/>
</dbReference>
<gene>
    <name type="primary">Pex11g</name>
    <name type="synonym">Pex11c</name>
</gene>